<protein>
    <recommendedName>
        <fullName>Growth-differentiation transition protein 7</fullName>
    </recommendedName>
</protein>
<reference key="1">
    <citation type="journal article" date="2005" name="Nature">
        <title>The genome of the social amoeba Dictyostelium discoideum.</title>
        <authorList>
            <person name="Eichinger L."/>
            <person name="Pachebat J.A."/>
            <person name="Gloeckner G."/>
            <person name="Rajandream M.A."/>
            <person name="Sucgang R."/>
            <person name="Berriman M."/>
            <person name="Song J."/>
            <person name="Olsen R."/>
            <person name="Szafranski K."/>
            <person name="Xu Q."/>
            <person name="Tunggal B."/>
            <person name="Kummerfeld S."/>
            <person name="Madera M."/>
            <person name="Konfortov B.A."/>
            <person name="Rivero F."/>
            <person name="Bankier A.T."/>
            <person name="Lehmann R."/>
            <person name="Hamlin N."/>
            <person name="Davies R."/>
            <person name="Gaudet P."/>
            <person name="Fey P."/>
            <person name="Pilcher K."/>
            <person name="Chen G."/>
            <person name="Saunders D."/>
            <person name="Sodergren E.J."/>
            <person name="Davis P."/>
            <person name="Kerhornou A."/>
            <person name="Nie X."/>
            <person name="Hall N."/>
            <person name="Anjard C."/>
            <person name="Hemphill L."/>
            <person name="Bason N."/>
            <person name="Farbrother P."/>
            <person name="Desany B."/>
            <person name="Just E."/>
            <person name="Morio T."/>
            <person name="Rost R."/>
            <person name="Churcher C.M."/>
            <person name="Cooper J."/>
            <person name="Haydock S."/>
            <person name="van Driessche N."/>
            <person name="Cronin A."/>
            <person name="Goodhead I."/>
            <person name="Muzny D.M."/>
            <person name="Mourier T."/>
            <person name="Pain A."/>
            <person name="Lu M."/>
            <person name="Harper D."/>
            <person name="Lindsay R."/>
            <person name="Hauser H."/>
            <person name="James K.D."/>
            <person name="Quiles M."/>
            <person name="Madan Babu M."/>
            <person name="Saito T."/>
            <person name="Buchrieser C."/>
            <person name="Wardroper A."/>
            <person name="Felder M."/>
            <person name="Thangavelu M."/>
            <person name="Johnson D."/>
            <person name="Knights A."/>
            <person name="Loulseged H."/>
            <person name="Mungall K.L."/>
            <person name="Oliver K."/>
            <person name="Price C."/>
            <person name="Quail M.A."/>
            <person name="Urushihara H."/>
            <person name="Hernandez J."/>
            <person name="Rabbinowitsch E."/>
            <person name="Steffen D."/>
            <person name="Sanders M."/>
            <person name="Ma J."/>
            <person name="Kohara Y."/>
            <person name="Sharp S."/>
            <person name="Simmonds M.N."/>
            <person name="Spiegler S."/>
            <person name="Tivey A."/>
            <person name="Sugano S."/>
            <person name="White B."/>
            <person name="Walker D."/>
            <person name="Woodward J.R."/>
            <person name="Winckler T."/>
            <person name="Tanaka Y."/>
            <person name="Shaulsky G."/>
            <person name="Schleicher M."/>
            <person name="Weinstock G.M."/>
            <person name="Rosenthal A."/>
            <person name="Cox E.C."/>
            <person name="Chisholm R.L."/>
            <person name="Gibbs R.A."/>
            <person name="Loomis W.F."/>
            <person name="Platzer M."/>
            <person name="Kay R.R."/>
            <person name="Williams J.G."/>
            <person name="Dear P.H."/>
            <person name="Noegel A.A."/>
            <person name="Barrell B.G."/>
            <person name="Kuspa A."/>
        </authorList>
    </citation>
    <scope>NUCLEOTIDE SEQUENCE [LARGE SCALE GENOMIC DNA]</scope>
    <source>
        <strain>AX4</strain>
    </source>
</reference>
<reference key="2">
    <citation type="journal article" date="2004" name="BMC Dev. Biol.">
        <title>Gdt2 regulates the transition of Dictyostelium cells from growth to differentiation.</title>
        <authorList>
            <person name="Chibalina M.V."/>
            <person name="Anjard C."/>
            <person name="Insall R.H."/>
        </authorList>
    </citation>
    <scope>IDENTIFICATION</scope>
    <scope>NOMENCLATURE</scope>
</reference>
<dbReference type="EMBL" id="AAFI02000189">
    <property type="protein sequence ID" value="EAL61281.1"/>
    <property type="molecule type" value="Genomic_DNA"/>
</dbReference>
<dbReference type="RefSeq" id="XP_629698.1">
    <property type="nucleotide sequence ID" value="XM_629696.1"/>
</dbReference>
<dbReference type="PaxDb" id="44689-DDB0220635"/>
<dbReference type="EnsemblProtists" id="EAL61281">
    <property type="protein sequence ID" value="EAL61281"/>
    <property type="gene ID" value="DDB_G0292314"/>
</dbReference>
<dbReference type="GeneID" id="8628613"/>
<dbReference type="KEGG" id="ddi:DDB_G0292314"/>
<dbReference type="dictyBase" id="DDB_G0292314">
    <property type="gene designation" value="gdt7"/>
</dbReference>
<dbReference type="VEuPathDB" id="AmoebaDB:DDB_G0292314"/>
<dbReference type="HOGENOM" id="CLU_351415_0_0_1"/>
<dbReference type="InParanoid" id="Q54DE3"/>
<dbReference type="PhylomeDB" id="Q54DE3"/>
<dbReference type="PRO" id="PR:Q54DE3"/>
<dbReference type="Proteomes" id="UP000002195">
    <property type="component" value="Chromosome 6"/>
</dbReference>
<dbReference type="GO" id="GO:0005576">
    <property type="term" value="C:extracellular region"/>
    <property type="evidence" value="ECO:0007669"/>
    <property type="project" value="UniProtKB-SubCell"/>
</dbReference>
<dbReference type="GO" id="GO:0050793">
    <property type="term" value="P:regulation of developmental process"/>
    <property type="evidence" value="ECO:0000318"/>
    <property type="project" value="GO_Central"/>
</dbReference>
<dbReference type="InterPro" id="IPR052015">
    <property type="entry name" value="GDT_regulator"/>
</dbReference>
<dbReference type="InterPro" id="IPR026237">
    <property type="entry name" value="STKINASEGDT"/>
</dbReference>
<dbReference type="PANTHER" id="PTHR47774">
    <property type="entry name" value="GROWTH-DIFFERENTIATION TRANSITION PROTEIN 5-RELATED"/>
    <property type="match status" value="1"/>
</dbReference>
<dbReference type="PANTHER" id="PTHR47774:SF1">
    <property type="entry name" value="GROWTH-DIFFERENTIATION TRANSITION PROTEIN 5-RELATED"/>
    <property type="match status" value="1"/>
</dbReference>
<dbReference type="PRINTS" id="PR02079">
    <property type="entry name" value="STKINASEGDT"/>
</dbReference>
<proteinExistence type="inferred from homology"/>
<evidence type="ECO:0000255" key="1"/>
<evidence type="ECO:0000305" key="2"/>
<name>GDT7_DICDI</name>
<sequence length="801" mass="89743">MIKTILIKLILLVIFCYHFLFAEEDVISTPPGYYDLIRHKRDPPITEYQSSQDTDLYYPDVCRNALRPLDYPWINEFAPIFFPGFNMGGFNSIFIPKNRSMIFRTPFQDSLVTLHVVCIEGTFIVEGNRFLFANTIIVLPGGRFESTTGIEFYDENDSGVSFYPDLPKDPSGFFPGILVLGGSISVVGKEPIVYRASRINDSSIEISPPVPEIIISPNPWDRVYKLVKIFTELYPLGFYCRYNTDEVGKILSLSSYLLYPFPPVSENDKIIRVLVETDRQQTVIPTNIYKREYATKGSIYITGGSNAYFKNIFFKNLGFTKNEPYNDTKLIFSPNDTNVVTDIIMGTNQKFRSSLYIESSKNVTIEGCAFVENDLTRSPLVFFDSNVKISNSLISSKSGSNIIALHGTDSIQSSNNSYLLEKIDLASWDVERNNNIDCGNQGNGIFSISPNINSNGDYFSGQQTAFNYYFIPNNSVNSNQDNSSLNSRPIEIIIKDSMFNPTASNGSLNKYFLNINTDGNKTISTYFTVRDLKTSHAINMNLNNSAIAFYNLKGGEGFKMEGNVERLDIIGSIINSNGSIKNISTSTTNIIDSYIYSSSSDIQPFNNQIYGSLITPYYYSDSNTLDKFEIKSILPNAPIQIVSGSLFNVSVQIQTLSSSVSIDNISCIFTSSVINTTVVQVNSNYSCILPLNITNEEGPLNLRVTLVNNTSPSSVSSDNYLYIIDFPEITVFNTYEFYSGWLMDNSNSSQQISFGGNSFKNGCNKVDSNCTISQNSKYSTVFSQLSITLPSNFKTKTHWMK</sequence>
<feature type="signal peptide" evidence="1">
    <location>
        <begin position="1"/>
        <end position="22"/>
    </location>
</feature>
<feature type="chain" id="PRO_0000323584" description="Growth-differentiation transition protein 7">
    <location>
        <begin position="23"/>
        <end position="801"/>
    </location>
</feature>
<keyword id="KW-1185">Reference proteome</keyword>
<keyword id="KW-0964">Secreted</keyword>
<keyword id="KW-0732">Signal</keyword>
<accession>Q54DE3</accession>
<gene>
    <name type="primary">gdt7</name>
    <name type="ORF">DDB_G0292314</name>
</gene>
<comment type="subcellular location">
    <subcellularLocation>
        <location evidence="2">Secreted</location>
    </subcellularLocation>
</comment>
<comment type="similarity">
    <text evidence="2">Belongs to the GDT family.</text>
</comment>
<organism>
    <name type="scientific">Dictyostelium discoideum</name>
    <name type="common">Social amoeba</name>
    <dbReference type="NCBI Taxonomy" id="44689"/>
    <lineage>
        <taxon>Eukaryota</taxon>
        <taxon>Amoebozoa</taxon>
        <taxon>Evosea</taxon>
        <taxon>Eumycetozoa</taxon>
        <taxon>Dictyostelia</taxon>
        <taxon>Dictyosteliales</taxon>
        <taxon>Dictyosteliaceae</taxon>
        <taxon>Dictyostelium</taxon>
    </lineage>
</organism>